<name>CREL1_XENTR</name>
<gene>
    <name type="primary">creld1</name>
</gene>
<reference key="1">
    <citation type="journal article" date="2010" name="Science">
        <title>The genome of the Western clawed frog Xenopus tropicalis.</title>
        <authorList>
            <person name="Hellsten U."/>
            <person name="Harland R.M."/>
            <person name="Gilchrist M.J."/>
            <person name="Hendrix D."/>
            <person name="Jurka J."/>
            <person name="Kapitonov V."/>
            <person name="Ovcharenko I."/>
            <person name="Putnam N.H."/>
            <person name="Shu S."/>
            <person name="Taher L."/>
            <person name="Blitz I.L."/>
            <person name="Blumberg B."/>
            <person name="Dichmann D.S."/>
            <person name="Dubchak I."/>
            <person name="Amaya E."/>
            <person name="Detter J.C."/>
            <person name="Fletcher R."/>
            <person name="Gerhard D.S."/>
            <person name="Goodstein D."/>
            <person name="Graves T."/>
            <person name="Grigoriev I.V."/>
            <person name="Grimwood J."/>
            <person name="Kawashima T."/>
            <person name="Lindquist E."/>
            <person name="Lucas S.M."/>
            <person name="Mead P.E."/>
            <person name="Mitros T."/>
            <person name="Ogino H."/>
            <person name="Ohta Y."/>
            <person name="Poliakov A.V."/>
            <person name="Pollet N."/>
            <person name="Robert J."/>
            <person name="Salamov A."/>
            <person name="Sater A.K."/>
            <person name="Schmutz J."/>
            <person name="Terry A."/>
            <person name="Vize P.D."/>
            <person name="Warren W.C."/>
            <person name="Wells D."/>
            <person name="Wills A."/>
            <person name="Wilson R.K."/>
            <person name="Zimmerman L.B."/>
            <person name="Zorn A.M."/>
            <person name="Grainger R."/>
            <person name="Grammer T."/>
            <person name="Khokha M.K."/>
            <person name="Richardson P.M."/>
            <person name="Rokhsar D.S."/>
        </authorList>
    </citation>
    <scope>NUCLEOTIDE SEQUENCE [LARGE SCALE GENOMIC DNA]</scope>
    <source>
        <strain>N6</strain>
    </source>
</reference>
<reference key="2">
    <citation type="journal article" date="2024" name="Genet. Med.">
        <title>Biallelic CRELD1 variants cause a multisystem syndrome, including neurodevelopmental phenotypes, cardiac dysrhythmias, and frequent infections.</title>
        <authorList>
            <person name="Jeffries L."/>
            <person name="Mis E.K."/>
            <person name="McWalter K."/>
            <person name="Donkervoort S."/>
            <person name="Brodsky N.N."/>
            <person name="Carpier J.M."/>
            <person name="Ji W."/>
            <person name="Ionita C."/>
            <person name="Roy B."/>
            <person name="Morrow J.S."/>
            <person name="Darbinyan A."/>
            <person name="Iyer K."/>
            <person name="Aul R.B."/>
            <person name="Banka S."/>
            <person name="Chao K.R."/>
            <person name="Cobbold L."/>
            <person name="Cohen S."/>
            <person name="Custodio H.M."/>
            <person name="Drummond-Borg M."/>
            <person name="Elmslie F."/>
            <person name="Finanger E."/>
            <person name="Hainline B.E."/>
            <person name="Helbig I."/>
            <person name="Hewson S."/>
            <person name="Hu Y."/>
            <person name="Jackson A."/>
            <person name="Josifova D."/>
            <person name="Konstantino M."/>
            <person name="Leach M.E."/>
            <person name="Mak B."/>
            <person name="McCormick D."/>
            <person name="McGee E."/>
            <person name="Nelson S."/>
            <person name="Nguyen J."/>
            <person name="Nugent K."/>
            <person name="Ortega L."/>
            <person name="Goodkin H.P."/>
            <person name="Roeder E."/>
            <person name="Roy S."/>
            <person name="Sapp K."/>
            <person name="Saade D."/>
            <person name="Sisodiya S.M."/>
            <person name="Stals K."/>
            <person name="Towner S."/>
            <person name="Wilson W."/>
            <person name="Khokha M.K."/>
            <person name="Boennemann C.G."/>
            <person name="Lucas C.L."/>
            <person name="Lakhani S.A."/>
        </authorList>
    </citation>
    <scope>DISRUPTION PHENOTYPE</scope>
</reference>
<accession>A0A6I8RMG7</accession>
<feature type="signal peptide" evidence="5">
    <location>
        <begin position="1"/>
        <end position="29"/>
    </location>
</feature>
<feature type="chain" id="PRO_5041613138" description="Protein disulfide isomerase CRELD1">
    <location>
        <begin position="30"/>
        <end position="410"/>
    </location>
</feature>
<feature type="topological domain" description="Extracellular" evidence="8">
    <location>
        <begin position="30"/>
        <end position="352"/>
    </location>
</feature>
<feature type="transmembrane region" description="Helical" evidence="5">
    <location>
        <begin position="353"/>
        <end position="373"/>
    </location>
</feature>
<feature type="topological domain" description="Cytoplasmic" evidence="8">
    <location>
        <position position="374"/>
    </location>
</feature>
<feature type="transmembrane region" description="Helical" evidence="5">
    <location>
        <begin position="375"/>
        <end position="395"/>
    </location>
</feature>
<feature type="topological domain" description="Extracellular" evidence="8">
    <location>
        <begin position="396"/>
        <end position="410"/>
    </location>
</feature>
<feature type="domain" description="EGF-like 1" evidence="6">
    <location>
        <begin position="139"/>
        <end position="179"/>
    </location>
</feature>
<feature type="repeat" description="FU 1" evidence="5">
    <location>
        <begin position="194"/>
        <end position="243"/>
    </location>
</feature>
<feature type="repeat" description="FU 2" evidence="5">
    <location>
        <begin position="254"/>
        <end position="301"/>
    </location>
</feature>
<feature type="domain" description="EGF-like 2; calcium-binding" evidence="6">
    <location>
        <begin position="291"/>
        <end position="332"/>
    </location>
</feature>
<feature type="short sequence motif" description="CXXC" evidence="1">
    <location>
        <begin position="32"/>
        <end position="35"/>
    </location>
</feature>
<feature type="short sequence motif" description="CXXC" evidence="4">
    <location>
        <begin position="264"/>
        <end position="267"/>
    </location>
</feature>
<feature type="disulfide bond" description="Redox-active" evidence="4">
    <location>
        <begin position="32"/>
        <end position="35"/>
    </location>
</feature>
<feature type="disulfide bond" evidence="6">
    <location>
        <begin position="141"/>
        <end position="155"/>
    </location>
</feature>
<feature type="disulfide bond" evidence="6">
    <location>
        <begin position="149"/>
        <end position="167"/>
    </location>
</feature>
<feature type="disulfide bond" evidence="6">
    <location>
        <begin position="169"/>
        <end position="178"/>
    </location>
</feature>
<feature type="disulfide bond" description="Redox-active" evidence="4">
    <location>
        <begin position="264"/>
        <end position="267"/>
    </location>
</feature>
<feature type="disulfide bond" evidence="6">
    <location>
        <begin position="295"/>
        <end position="309"/>
    </location>
</feature>
<feature type="disulfide bond" evidence="6">
    <location>
        <begin position="302"/>
        <end position="318"/>
    </location>
</feature>
<feature type="disulfide bond" evidence="6">
    <location>
        <begin position="320"/>
        <end position="331"/>
    </location>
</feature>
<sequence length="410" mass="45448">MGMSRRMFLTVYGSLWLLLLLSRPGVSKPQLCQTCQNLVTNVLKGIEKTAGLNFGGGNTAWEEEKLSKYEISETRLLEVIETACDKSDFDCNKMLEQNEEHMESWWFKKQKEQPDLFQWLCMDTLRLCCPKGRFGADCLSCPGGTEKPCSGNGQCNGDGTRFGTGVCDCYTSYGGPVCMDCALGYYEQARNESHLVCSECYRACSKCIGPGDDQCVLCKRGWLLHDGKCIDIDECGTEKDHCKSNQFCFNTDGSYECRECDKSCIGCMGGGPARCKKCNKGYYRDGVKCLDVDECDSELPKCKGSHEECVNTEGSFTCVCEKDYSRIDGMCRPDSYDSNAEKGLFDDITDDEVVVLQQMFFGVVICALATLAAKGDMVFTAIFIGAVAAMAGYWLSEKGDRALDSFMKGR</sequence>
<organism>
    <name type="scientific">Xenopus tropicalis</name>
    <name type="common">Western clawed frog</name>
    <name type="synonym">Silurana tropicalis</name>
    <dbReference type="NCBI Taxonomy" id="8364"/>
    <lineage>
        <taxon>Eukaryota</taxon>
        <taxon>Metazoa</taxon>
        <taxon>Chordata</taxon>
        <taxon>Craniata</taxon>
        <taxon>Vertebrata</taxon>
        <taxon>Euteleostomi</taxon>
        <taxon>Amphibia</taxon>
        <taxon>Batrachia</taxon>
        <taxon>Anura</taxon>
        <taxon>Pipoidea</taxon>
        <taxon>Pipidae</taxon>
        <taxon>Xenopodinae</taxon>
        <taxon>Xenopus</taxon>
        <taxon>Silurana</taxon>
    </lineage>
</organism>
<evidence type="ECO:0000250" key="1">
    <source>
        <dbReference type="UniProtKB" id="Q19267"/>
    </source>
</evidence>
<evidence type="ECO:0000250" key="2">
    <source>
        <dbReference type="UniProtKB" id="Q91XD7"/>
    </source>
</evidence>
<evidence type="ECO:0000250" key="3">
    <source>
        <dbReference type="UniProtKB" id="Q96HD1"/>
    </source>
</evidence>
<evidence type="ECO:0000250" key="4">
    <source>
        <dbReference type="UniProtKB" id="Q9CYA0"/>
    </source>
</evidence>
<evidence type="ECO:0000255" key="5"/>
<evidence type="ECO:0000255" key="6">
    <source>
        <dbReference type="PROSITE-ProRule" id="PRU00076"/>
    </source>
</evidence>
<evidence type="ECO:0000269" key="7">
    <source>
    </source>
</evidence>
<evidence type="ECO:0000305" key="8"/>
<keyword id="KW-0106">Calcium</keyword>
<keyword id="KW-1015">Disulfide bond</keyword>
<keyword id="KW-0245">EGF-like domain</keyword>
<keyword id="KW-0413">Isomerase</keyword>
<keyword id="KW-0472">Membrane</keyword>
<keyword id="KW-0676">Redox-active center</keyword>
<keyword id="KW-1185">Reference proteome</keyword>
<keyword id="KW-0677">Repeat</keyword>
<keyword id="KW-0732">Signal</keyword>
<keyword id="KW-0812">Transmembrane</keyword>
<keyword id="KW-1133">Transmembrane helix</keyword>
<proteinExistence type="inferred from homology"/>
<protein>
    <recommendedName>
        <fullName>Protein disulfide isomerase CRELD1</fullName>
        <ecNumber evidence="4">5.3.4.1</ecNumber>
    </recommendedName>
    <alternativeName>
        <fullName>Cysteine-rich with EGF-like domain protein 1</fullName>
    </alternativeName>
</protein>
<dbReference type="EC" id="5.3.4.1" evidence="4"/>
<dbReference type="EMBL" id="AAMC04000004">
    <property type="status" value="NOT_ANNOTATED_CDS"/>
    <property type="molecule type" value="Genomic_DNA"/>
</dbReference>
<dbReference type="RefSeq" id="XP_012817147.1">
    <property type="nucleotide sequence ID" value="XM_012961693.3"/>
</dbReference>
<dbReference type="FunCoup" id="A0A6I8RMG7">
    <property type="interactions" value="292"/>
</dbReference>
<dbReference type="GeneID" id="100498303"/>
<dbReference type="KEGG" id="xtr:100498303"/>
<dbReference type="AGR" id="Xenbase:XB-GENE-982818"/>
<dbReference type="CTD" id="78987"/>
<dbReference type="Xenbase" id="XB-GENE-982818">
    <property type="gene designation" value="creld1"/>
</dbReference>
<dbReference type="OMA" id="HCRANQY"/>
<dbReference type="OrthoDB" id="10045365at2759"/>
<dbReference type="Proteomes" id="UP000008143">
    <property type="component" value="Chromosome 4"/>
</dbReference>
<dbReference type="Bgee" id="ENSXETG00000023532">
    <property type="expression patterns" value="Expressed in skeletal muscle tissue and 12 other cell types or tissues"/>
</dbReference>
<dbReference type="GO" id="GO:0016020">
    <property type="term" value="C:membrane"/>
    <property type="evidence" value="ECO:0007669"/>
    <property type="project" value="UniProtKB-SubCell"/>
</dbReference>
<dbReference type="GO" id="GO:0005509">
    <property type="term" value="F:calcium ion binding"/>
    <property type="evidence" value="ECO:0007669"/>
    <property type="project" value="InterPro"/>
</dbReference>
<dbReference type="GO" id="GO:0016853">
    <property type="term" value="F:isomerase activity"/>
    <property type="evidence" value="ECO:0007669"/>
    <property type="project" value="UniProtKB-KW"/>
</dbReference>
<dbReference type="CDD" id="cd00054">
    <property type="entry name" value="EGF_CA"/>
    <property type="match status" value="1"/>
</dbReference>
<dbReference type="CDD" id="cd00064">
    <property type="entry name" value="FU"/>
    <property type="match status" value="1"/>
</dbReference>
<dbReference type="Gene3D" id="2.10.220.10">
    <property type="entry name" value="Hormone Receptor, Insulin-like Growth Factor Receptor 1, Chain A, domain 2"/>
    <property type="match status" value="1"/>
</dbReference>
<dbReference type="Gene3D" id="2.10.25.10">
    <property type="entry name" value="Laminin"/>
    <property type="match status" value="1"/>
</dbReference>
<dbReference type="InterPro" id="IPR021852">
    <property type="entry name" value="DUF3456"/>
</dbReference>
<dbReference type="InterPro" id="IPR050751">
    <property type="entry name" value="ECM_structural_protein"/>
</dbReference>
<dbReference type="InterPro" id="IPR001881">
    <property type="entry name" value="EGF-like_Ca-bd_dom"/>
</dbReference>
<dbReference type="InterPro" id="IPR000742">
    <property type="entry name" value="EGF-like_dom"/>
</dbReference>
<dbReference type="InterPro" id="IPR000152">
    <property type="entry name" value="EGF-type_Asp/Asn_hydroxyl_site"/>
</dbReference>
<dbReference type="InterPro" id="IPR018097">
    <property type="entry name" value="EGF_Ca-bd_CS"/>
</dbReference>
<dbReference type="InterPro" id="IPR006212">
    <property type="entry name" value="Furin_repeat"/>
</dbReference>
<dbReference type="InterPro" id="IPR009030">
    <property type="entry name" value="Growth_fac_rcpt_cys_sf"/>
</dbReference>
<dbReference type="InterPro" id="IPR002049">
    <property type="entry name" value="LE_dom"/>
</dbReference>
<dbReference type="InterPro" id="IPR049883">
    <property type="entry name" value="NOTCH1_EGF-like"/>
</dbReference>
<dbReference type="PANTHER" id="PTHR24034">
    <property type="entry name" value="EGF-LIKE DOMAIN-CONTAINING PROTEIN"/>
    <property type="match status" value="1"/>
</dbReference>
<dbReference type="PANTHER" id="PTHR24034:SF209">
    <property type="entry name" value="EGF-LIKE DOMAIN-CONTAINING PROTEIN"/>
    <property type="match status" value="1"/>
</dbReference>
<dbReference type="Pfam" id="PF11938">
    <property type="entry name" value="DUF3456"/>
    <property type="match status" value="1"/>
</dbReference>
<dbReference type="Pfam" id="PF07645">
    <property type="entry name" value="EGF_CA"/>
    <property type="match status" value="2"/>
</dbReference>
<dbReference type="SMART" id="SM00181">
    <property type="entry name" value="EGF"/>
    <property type="match status" value="3"/>
</dbReference>
<dbReference type="SMART" id="SM00179">
    <property type="entry name" value="EGF_CA"/>
    <property type="match status" value="2"/>
</dbReference>
<dbReference type="SMART" id="SM00261">
    <property type="entry name" value="FU"/>
    <property type="match status" value="2"/>
</dbReference>
<dbReference type="SUPFAM" id="SSF57184">
    <property type="entry name" value="Growth factor receptor domain"/>
    <property type="match status" value="1"/>
</dbReference>
<dbReference type="PROSITE" id="PS00010">
    <property type="entry name" value="ASX_HYDROXYL"/>
    <property type="match status" value="1"/>
</dbReference>
<dbReference type="PROSITE" id="PS00022">
    <property type="entry name" value="EGF_1"/>
    <property type="match status" value="1"/>
</dbReference>
<dbReference type="PROSITE" id="PS50026">
    <property type="entry name" value="EGF_3"/>
    <property type="match status" value="1"/>
</dbReference>
<dbReference type="PROSITE" id="PS01187">
    <property type="entry name" value="EGF_CA"/>
    <property type="match status" value="2"/>
</dbReference>
<dbReference type="PROSITE" id="PS01248">
    <property type="entry name" value="EGF_LAM_1"/>
    <property type="match status" value="1"/>
</dbReference>
<comment type="function">
    <text evidence="2 4">Protein disulfide isomerase (By similarity). Promotes the localization of acetylcholine receptors (AChRs) to the plasma membrane (By similarity).</text>
</comment>
<comment type="catalytic activity">
    <reaction evidence="4">
        <text>Catalyzes the rearrangement of -S-S- bonds in proteins.</text>
        <dbReference type="EC" id="5.3.4.1"/>
    </reaction>
</comment>
<comment type="subcellular location">
    <subcellularLocation>
        <location evidence="3">Membrane</location>
        <topology evidence="3">Multi-pass membrane protein</topology>
    </subcellularLocation>
</comment>
<comment type="disruption phenotype">
    <text evidence="7">About half of the knockdown tadpoles exhibit severe defects of either early gastrulation disruption or edema and late embryonic lethality. Some also have tail defects. Surviving tadpoles show more robust seizure behaviors than wild-type in response to pilocarpine treatment.</text>
</comment>
<comment type="similarity">
    <text evidence="8">Belongs to the CRELD family.</text>
</comment>